<name>CLPB_CHLCV</name>
<keyword id="KW-0067">ATP-binding</keyword>
<keyword id="KW-0143">Chaperone</keyword>
<keyword id="KW-0175">Coiled coil</keyword>
<keyword id="KW-0963">Cytoplasm</keyword>
<keyword id="KW-0547">Nucleotide-binding</keyword>
<keyword id="KW-0677">Repeat</keyword>
<keyword id="KW-0346">Stress response</keyword>
<dbReference type="EMBL" id="AE015925">
    <property type="protein sequence ID" value="AAP05367.1"/>
    <property type="molecule type" value="Genomic_DNA"/>
</dbReference>
<dbReference type="RefSeq" id="WP_011006582.1">
    <property type="nucleotide sequence ID" value="NC_003361.3"/>
</dbReference>
<dbReference type="SMR" id="Q822Q4"/>
<dbReference type="STRING" id="227941.CCA_00625"/>
<dbReference type="KEGG" id="cca:CCA_00625"/>
<dbReference type="eggNOG" id="COG0542">
    <property type="taxonomic scope" value="Bacteria"/>
</dbReference>
<dbReference type="HOGENOM" id="CLU_005070_4_0_0"/>
<dbReference type="OrthoDB" id="9803641at2"/>
<dbReference type="Proteomes" id="UP000002193">
    <property type="component" value="Chromosome"/>
</dbReference>
<dbReference type="GO" id="GO:0005737">
    <property type="term" value="C:cytoplasm"/>
    <property type="evidence" value="ECO:0007669"/>
    <property type="project" value="UniProtKB-SubCell"/>
</dbReference>
<dbReference type="GO" id="GO:0005524">
    <property type="term" value="F:ATP binding"/>
    <property type="evidence" value="ECO:0007669"/>
    <property type="project" value="UniProtKB-KW"/>
</dbReference>
<dbReference type="GO" id="GO:0016887">
    <property type="term" value="F:ATP hydrolysis activity"/>
    <property type="evidence" value="ECO:0007669"/>
    <property type="project" value="InterPro"/>
</dbReference>
<dbReference type="GO" id="GO:0034605">
    <property type="term" value="P:cellular response to heat"/>
    <property type="evidence" value="ECO:0007669"/>
    <property type="project" value="TreeGrafter"/>
</dbReference>
<dbReference type="CDD" id="cd00009">
    <property type="entry name" value="AAA"/>
    <property type="match status" value="1"/>
</dbReference>
<dbReference type="CDD" id="cd19499">
    <property type="entry name" value="RecA-like_ClpB_Hsp104-like"/>
    <property type="match status" value="1"/>
</dbReference>
<dbReference type="FunFam" id="3.40.50.300:FF:000120">
    <property type="entry name" value="ATP-dependent chaperone ClpB"/>
    <property type="match status" value="1"/>
</dbReference>
<dbReference type="FunFam" id="3.40.50.300:FF:000025">
    <property type="entry name" value="ATP-dependent Clp protease subunit"/>
    <property type="match status" value="1"/>
</dbReference>
<dbReference type="FunFam" id="3.40.50.300:FF:000010">
    <property type="entry name" value="Chaperone clpB 1, putative"/>
    <property type="match status" value="1"/>
</dbReference>
<dbReference type="Gene3D" id="1.10.8.60">
    <property type="match status" value="1"/>
</dbReference>
<dbReference type="Gene3D" id="1.10.1780.10">
    <property type="entry name" value="Clp, N-terminal domain"/>
    <property type="match status" value="1"/>
</dbReference>
<dbReference type="Gene3D" id="3.40.50.300">
    <property type="entry name" value="P-loop containing nucleotide triphosphate hydrolases"/>
    <property type="match status" value="3"/>
</dbReference>
<dbReference type="InterPro" id="IPR003593">
    <property type="entry name" value="AAA+_ATPase"/>
</dbReference>
<dbReference type="InterPro" id="IPR003959">
    <property type="entry name" value="ATPase_AAA_core"/>
</dbReference>
<dbReference type="InterPro" id="IPR019489">
    <property type="entry name" value="Clp_ATPase_C"/>
</dbReference>
<dbReference type="InterPro" id="IPR036628">
    <property type="entry name" value="Clp_N_dom_sf"/>
</dbReference>
<dbReference type="InterPro" id="IPR004176">
    <property type="entry name" value="Clp_R_dom"/>
</dbReference>
<dbReference type="InterPro" id="IPR001270">
    <property type="entry name" value="ClpA/B"/>
</dbReference>
<dbReference type="InterPro" id="IPR018368">
    <property type="entry name" value="ClpA/B_CS1"/>
</dbReference>
<dbReference type="InterPro" id="IPR028299">
    <property type="entry name" value="ClpA/B_CS2"/>
</dbReference>
<dbReference type="InterPro" id="IPR041546">
    <property type="entry name" value="ClpA/ClpB_AAA_lid"/>
</dbReference>
<dbReference type="InterPro" id="IPR050130">
    <property type="entry name" value="ClpA_ClpB"/>
</dbReference>
<dbReference type="InterPro" id="IPR027417">
    <property type="entry name" value="P-loop_NTPase"/>
</dbReference>
<dbReference type="PANTHER" id="PTHR11638">
    <property type="entry name" value="ATP-DEPENDENT CLP PROTEASE"/>
    <property type="match status" value="1"/>
</dbReference>
<dbReference type="PANTHER" id="PTHR11638:SF18">
    <property type="entry name" value="HEAT SHOCK PROTEIN 104"/>
    <property type="match status" value="1"/>
</dbReference>
<dbReference type="Pfam" id="PF00004">
    <property type="entry name" value="AAA"/>
    <property type="match status" value="1"/>
</dbReference>
<dbReference type="Pfam" id="PF07724">
    <property type="entry name" value="AAA_2"/>
    <property type="match status" value="1"/>
</dbReference>
<dbReference type="Pfam" id="PF17871">
    <property type="entry name" value="AAA_lid_9"/>
    <property type="match status" value="1"/>
</dbReference>
<dbReference type="Pfam" id="PF02861">
    <property type="entry name" value="Clp_N"/>
    <property type="match status" value="2"/>
</dbReference>
<dbReference type="Pfam" id="PF10431">
    <property type="entry name" value="ClpB_D2-small"/>
    <property type="match status" value="1"/>
</dbReference>
<dbReference type="PRINTS" id="PR00300">
    <property type="entry name" value="CLPPROTEASEA"/>
</dbReference>
<dbReference type="SMART" id="SM00382">
    <property type="entry name" value="AAA"/>
    <property type="match status" value="2"/>
</dbReference>
<dbReference type="SMART" id="SM01086">
    <property type="entry name" value="ClpB_D2-small"/>
    <property type="match status" value="1"/>
</dbReference>
<dbReference type="SUPFAM" id="SSF81923">
    <property type="entry name" value="Double Clp-N motif"/>
    <property type="match status" value="1"/>
</dbReference>
<dbReference type="SUPFAM" id="SSF52540">
    <property type="entry name" value="P-loop containing nucleoside triphosphate hydrolases"/>
    <property type="match status" value="2"/>
</dbReference>
<dbReference type="PROSITE" id="PS51903">
    <property type="entry name" value="CLP_R"/>
    <property type="match status" value="1"/>
</dbReference>
<dbReference type="PROSITE" id="PS00870">
    <property type="entry name" value="CLPAB_1"/>
    <property type="match status" value="1"/>
</dbReference>
<dbReference type="PROSITE" id="PS00871">
    <property type="entry name" value="CLPAB_2"/>
    <property type="match status" value="1"/>
</dbReference>
<protein>
    <recommendedName>
        <fullName>Chaperone protein ClpB</fullName>
    </recommendedName>
</protein>
<proteinExistence type="inferred from homology"/>
<organism>
    <name type="scientific">Chlamydia caviae (strain ATCC VR-813 / DSM 19441 / 03DC25 / GPIC)</name>
    <name type="common">Chlamydophila caviae</name>
    <dbReference type="NCBI Taxonomy" id="227941"/>
    <lineage>
        <taxon>Bacteria</taxon>
        <taxon>Pseudomonadati</taxon>
        <taxon>Chlamydiota</taxon>
        <taxon>Chlamydiia</taxon>
        <taxon>Chlamydiales</taxon>
        <taxon>Chlamydiaceae</taxon>
        <taxon>Chlamydia/Chlamydophila group</taxon>
        <taxon>Chlamydia</taxon>
    </lineage>
</organism>
<reference key="1">
    <citation type="journal article" date="2003" name="Nucleic Acids Res.">
        <title>Genome sequence of Chlamydophila caviae (Chlamydia psittaci GPIC): examining the role of niche-specific genes in the evolution of the Chlamydiaceae.</title>
        <authorList>
            <person name="Read T.D."/>
            <person name="Myers G.S.A."/>
            <person name="Brunham R.C."/>
            <person name="Nelson W.C."/>
            <person name="Paulsen I.T."/>
            <person name="Heidelberg J.F."/>
            <person name="Holtzapple E.K."/>
            <person name="Khouri H.M."/>
            <person name="Federova N.B."/>
            <person name="Carty H.A."/>
            <person name="Umayam L.A."/>
            <person name="Haft D.H."/>
            <person name="Peterson J.D."/>
            <person name="Beanan M.J."/>
            <person name="White O."/>
            <person name="Salzberg S.L."/>
            <person name="Hsia R.-C."/>
            <person name="McClarty G."/>
            <person name="Rank R.G."/>
            <person name="Bavoil P.M."/>
            <person name="Fraser C.M."/>
        </authorList>
    </citation>
    <scope>NUCLEOTIDE SEQUENCE [LARGE SCALE GENOMIC DNA]</scope>
    <source>
        <strain>ATCC VR-813 / DSM 19441 / 03DC25 / GPIC</strain>
    </source>
</reference>
<feature type="chain" id="PRO_0000191104" description="Chaperone protein ClpB">
    <location>
        <begin position="1"/>
        <end position="864"/>
    </location>
</feature>
<feature type="domain" description="Clp R" evidence="2">
    <location>
        <begin position="1"/>
        <end position="145"/>
    </location>
</feature>
<feature type="region of interest" description="Repeat 1" evidence="2">
    <location>
        <begin position="4"/>
        <end position="69"/>
    </location>
</feature>
<feature type="region of interest" description="Repeat 2" evidence="2">
    <location>
        <begin position="81"/>
        <end position="145"/>
    </location>
</feature>
<feature type="region of interest" description="NBD1" evidence="1">
    <location>
        <begin position="158"/>
        <end position="339"/>
    </location>
</feature>
<feature type="region of interest" description="Linker" evidence="1">
    <location>
        <begin position="340"/>
        <end position="545"/>
    </location>
</feature>
<feature type="region of interest" description="NBD2" evidence="1">
    <location>
        <begin position="555"/>
        <end position="769"/>
    </location>
</feature>
<feature type="region of interest" description="C-terminal" evidence="1">
    <location>
        <begin position="770"/>
        <end position="864"/>
    </location>
</feature>
<feature type="coiled-coil region" evidence="1">
    <location>
        <begin position="390"/>
        <end position="524"/>
    </location>
</feature>
<feature type="binding site" evidence="1">
    <location>
        <begin position="205"/>
        <end position="212"/>
    </location>
    <ligand>
        <name>ATP</name>
        <dbReference type="ChEBI" id="CHEBI:30616"/>
        <label>1</label>
    </ligand>
</feature>
<feature type="binding site" evidence="1">
    <location>
        <begin position="605"/>
        <end position="612"/>
    </location>
    <ligand>
        <name>ATP</name>
        <dbReference type="ChEBI" id="CHEBI:30616"/>
        <label>2</label>
    </ligand>
</feature>
<evidence type="ECO:0000250" key="1"/>
<evidence type="ECO:0000255" key="2">
    <source>
        <dbReference type="PROSITE-ProRule" id="PRU01251"/>
    </source>
</evidence>
<evidence type="ECO:0000305" key="3"/>
<sequence length="864" mass="96869">MDKISDAVSEALEKAFELAQSAKNPYVSENHFLKCLLENTESLFYLIIKDIHNNPKLLTSAVDEALSLEPSVIEGSAMPKPSPGLQSLLLDAKQEAKDLGDEYLSGDHVLLAFWKSNKEPFASWKKTVKISLDDLKKLIINIRRGNRMDSPSAENNLRGLEKYCKNLTLLAKEGKLDPVIGRDEEIRRTVQVLSRRTKNNPMLIGEPGVGKTAIAEGLALRIVQGDIPESLKGKQLYVLDMGALIAGAKYRGEFEERLKSVLKDVESVDGESILFIDEVHTLVGAGATDGAMDAANLLKPALARGTLHCIGATTLNEYQKYIEKDAALERRFQPIFVTEPSLEDAVFILRGLREKYEIFHGVRITEGALNAAVLLSYRYIPDRFLPDKAIDLIDEAASLIRMQIGSLPLPIDEKERELAALIVKQEAIKREKAPSYQEEAAAMQQSIEQLKEELAALRLRWDEEKKLITGLKEKKNSLENMKFSEEEAERVADYNRVAELRYSLIPALEEEIREDEEALNQRDNRLLQEEVDERLIAQVVANWTGIPIQKMLEGEAEKLLVLEESLEERVVGQPFAISAVSDSIRAARVGLSDPQRPLGVFLFLGPTGVGKTELAKALADLLFNKEEAMVRFDMTEYMEKHSVSKLIGSPPGYVGYEEGGSLSEALRRRPYSVVLFDEIEKADKEVFNILLQIFDEGILTDSKKRKVNCKNALFIMTSNIGSQELADYCAKKGSRVSKETVLSVVAPTLKKYFSPEFINRIDDILPFVPLNTEDIVKIVGIQMRRVAQRLLERRVTLTWDDSVILYLSEQGYDSSFGARPLKRLIQQKVVTLLSKALLKGDIKSDTSIELTMSKDVLLFKKIEG</sequence>
<comment type="function">
    <text evidence="1">Part of a stress-induced multi-chaperone system, it is involved in the recovery of the cell from heat-induced damage, in cooperation with DnaK, DnaJ and GrpE. Acts before DnaK, in the processing of protein aggregates. Protein binding stimulates the ATPase activity; ATP hydrolysis unfolds the denatured protein aggregates, which probably helps expose new hydrophobic binding sites on the surface of ClpB-bound aggregates, contributing to the solubilization and refolding of denatured protein aggregates by DnaK (By similarity).</text>
</comment>
<comment type="subunit">
    <text evidence="1">Homohexamer. The oligomerization is ATP-dependent (By similarity).</text>
</comment>
<comment type="subcellular location">
    <subcellularLocation>
        <location evidence="3">Cytoplasm</location>
    </subcellularLocation>
</comment>
<comment type="domain">
    <text evidence="1">The Clp repeat (R) domain probably functions as a substrate-discriminating domain, recruiting aggregated proteins to the ClpB hexamer and/or stabilizing bound proteins. The NBD2 domain is responsible for oligomerization, whereas the NBD1 domain stabilizes the hexamer probably in an ATP-dependent manner. The movement of the coiled-coil domain is essential for ClpB ability to rescue proteins from an aggregated state, probably by pulling apart large aggregated proteins, which are bound between the coiled-coils motifs of adjacent ClpB subunits in the functional hexamer (By similarity).</text>
</comment>
<comment type="similarity">
    <text evidence="3">Belongs to the ClpA/ClpB family.</text>
</comment>
<gene>
    <name type="primary">clpB</name>
    <name type="ordered locus">CCA_00625</name>
</gene>
<accession>Q822Q4</accession>